<accession>Q8J0B2</accession>
<gene>
    <name evidence="11" type="primary">lolC1</name>
    <name evidence="10" type="synonym">lolC</name>
</gene>
<name>LOLC1_EPIUN</name>
<keyword id="KW-0017">Alkaloid metabolism</keyword>
<keyword id="KW-0663">Pyridoxal phosphate</keyword>
<keyword id="KW-0808">Transferase</keyword>
<organism>
    <name type="scientific">Epichloe uncinata</name>
    <name type="common">Endophyte fungus</name>
    <name type="synonym">Neotyphodium uncinatum</name>
    <dbReference type="NCBI Taxonomy" id="5050"/>
    <lineage>
        <taxon>Eukaryota</taxon>
        <taxon>Fungi</taxon>
        <taxon>Dikarya</taxon>
        <taxon>Ascomycota</taxon>
        <taxon>Pezizomycotina</taxon>
        <taxon>Sordariomycetes</taxon>
        <taxon>Hypocreomycetidae</taxon>
        <taxon>Hypocreales</taxon>
        <taxon>Clavicipitaceae</taxon>
        <taxon>Epichloe</taxon>
    </lineage>
</organism>
<protein>
    <recommendedName>
        <fullName evidence="11">Sulfhydrylase-like protein lolC1</fullName>
        <ecNumber evidence="13">2.5.1.-</ecNumber>
    </recommendedName>
    <alternativeName>
        <fullName evidence="11">Loline biosynthesis cluster 1 protein C</fullName>
    </alternativeName>
</protein>
<feature type="chain" id="PRO_0000444345" description="Sulfhydrylase-like protein lolC1">
    <location>
        <begin position="1"/>
        <end position="473"/>
    </location>
</feature>
<feature type="modified residue" description="N6-(pyridoxal phosphate)lysine" evidence="1">
    <location>
        <position position="226"/>
    </location>
</feature>
<evidence type="ECO:0000250" key="1">
    <source>
        <dbReference type="UniProtKB" id="P06721"/>
    </source>
</evidence>
<evidence type="ECO:0000250" key="2">
    <source>
        <dbReference type="UniProtKB" id="P50125"/>
    </source>
</evidence>
<evidence type="ECO:0000269" key="3">
    <source>
    </source>
</evidence>
<evidence type="ECO:0000269" key="4">
    <source>
    </source>
</evidence>
<evidence type="ECO:0000269" key="5">
    <source>
    </source>
</evidence>
<evidence type="ECO:0000269" key="6">
    <source>
    </source>
</evidence>
<evidence type="ECO:0000269" key="7">
    <source>
    </source>
</evidence>
<evidence type="ECO:0000269" key="8">
    <source>
    </source>
</evidence>
<evidence type="ECO:0000269" key="9">
    <source>
    </source>
</evidence>
<evidence type="ECO:0000303" key="10">
    <source>
    </source>
</evidence>
<evidence type="ECO:0000303" key="11">
    <source>
    </source>
</evidence>
<evidence type="ECO:0000305" key="12"/>
<evidence type="ECO:0000305" key="13">
    <source>
    </source>
</evidence>
<evidence type="ECO:0000305" key="14">
    <source>
    </source>
</evidence>
<sequence length="473" mass="51610">MTVDTITSTSNGNQDVPKEFFPKEFETQLLHVGRFPDILGSCAVPVYSSAAFEFNSVAHGARLLNLTQFGNIYSRFTNPTVNVLQNRLAGLEGGVAACAVASGSAAVVVTVMALAGVGDNFVSSFHVHAGTFHQFESLAKQMGIECRFVKSRDPADFAAAIDDKTKFVWLETISNPGNVILDLEAVSMVCHTKGIPLICDNTFGCAGYFCRPINHGVDIVVHSATKWIGGHGTTVGGVIVDGGTFDWGQHPDRFPQFHDPRTRLWERFSRRAFAVRCQFEILRDTGSTLSAPAAQQLLVGLESLAVRCERHAQNAAKIADWLREHPLVAWVSYVGHPNHPDHQGALKYLKRGFGSVICFGLRGGFEAGALFCDALKMVITTTNLGDAKTLILHPASTTHEHFSSEHRAEAGVTDDMIRLSVGIEQIKDIKADFEQAFEQVLRGKKSLRKPCIGKILLQDEINEDLFGPSACRT</sequence>
<comment type="function">
    <text evidence="3 4 5 6 7 8 9">Sulfhydrylase-like protein; part of the gene cluster that mediates the biosynthesis of loline alkaloids, potent insecticidal agents composed of a pyrrolizidine ring system and an uncommon ether bridge linking carbons 2 and 7 (PubMed:15654104). Lolines are structurally differentiated by the various modifications of the L-amino group and include norloline, loline, N-methylloline, N-acetylloline, N-acetylnorloline, and N-formylloline (PubMed:15861432, PubMed:25531527). The first committed step is the condensation of O-acetyl-L-homoserine (derived from L-aspartic acid) and L-proline, probably catalyzed by the gamma-type pyridoxal 5'-phosphate(PLP)-dependent enzyme lolC, to give the diamino diacid, NACPP (PubMed:15861432, PubMed:16755627). Ensuing cyclization, decarboxylation, and acetylation steps yield 1-exo-acetamidopyrrolizidine (AcAP) (PubMed:24374065). LolO is required for installation of the ether bridge upon the pathway intermediate, 1-exo-acetamidopyrrolizidine (AcAP) (PubMed:29537853). In sequential 2-oxoglutarate- and O(2)-consuming steps, lolO removes hydrogens from C2 and C7 of AcAP to form both carbon-oxygen bonds in N-acetylnorloline (NANL), the precursor to all other lolines (PubMed:24374065, PubMed:29537853). The enzymes lolD, lolE, lolF and lolT have also been proposed to be involved in the ether-bridge installation (PubMed:15654104). Further processing of the exocyclic moiety of NANL by fungal N-acetamidase (LolN), methyltransferase (LolM), and cytochrome P450 (LolP) enzymes, with occasional involvement of a plant acetyltransferase, generates the other known lolines (PubMed:18655839, PubMed:25531527). LolN transforms NANL to norlonine which is monomethylated and dimethylated to respectively lonine and N-methyllonine (NML) by lolM (PubMed:25531527). LolP catalyzes hydroxylation of the methyl group in N-methylloline (NML) and further oxygenation to N-formylloline (NFL) (PubMed:18655839). A plant acetyltransferase is responsible for the acetylation of loline to form N-acetylloline (NAL) (PubMed:25531527). LolA might interact with aspartate kinase to prevent feedback inhibition of its activity by these end products and thereby promote production of L-homoserine from L-aspartate (PubMed:15654104).</text>
</comment>
<comment type="cofactor">
    <cofactor evidence="2">
        <name>pyridoxal 5'-phosphate</name>
        <dbReference type="ChEBI" id="CHEBI:597326"/>
    </cofactor>
</comment>
<comment type="pathway">
    <text evidence="13">Alkaloid biosynthesis.</text>
</comment>
<comment type="induction">
    <text evidence="3">Expression is induced in loline alkaloid-producing cultures as well as in planta (PubMed:15654104).</text>
</comment>
<comment type="disruption phenotype">
    <text evidence="3">Significantly decreases loline-alkaloid production (PubMed:15654104).</text>
</comment>
<comment type="biotechnology">
    <text evidence="14">Loline alkaloids show broad-spectrum anti-insect activity, and different lolines may have different biological activities (PubMed:25531527). In vitro tests of NFL, NAL, NML, and semisynthetic loline derivatives with long carbon-chain acylations on the 1-amine have shown that many are effective against both fall armyworm larvae and European corn borer larvae, but the effects seem to differ depending on the modifications (PubMed:25531527). N-Formylloline reduces the weight gain of fall armyworms by deterring feeding, and does not significantly affect corn borers (PubMed:25531527). In contrast, NAL reduces the weight gain of corn borer larvae without changing larval feeding behavior, indicating that its effect is due to metabolic toxicity. N-formylloline, NAL, and NML are almost as potent as nicotine in insecticidal activity against green bugs (PubMed:25531527).</text>
</comment>
<comment type="similarity">
    <text evidence="12">Belongs to the trans-sulfuration enzymes family.</text>
</comment>
<reference key="1">
    <citation type="journal article" date="2002" name="Fungal Genet. Biol.">
        <title>Expressed sequence tags and genes associated with loline alkaloid expression by the fungal endophyte Neotyphodium uncinatum.</title>
        <authorList>
            <person name="Spiering M.J."/>
            <person name="Wilkinson H.H."/>
            <person name="Blankenship J.D."/>
            <person name="Schardl C.L."/>
        </authorList>
    </citation>
    <scope>NUCLEOTIDE SEQUENCE [MRNA]</scope>
    <source>
        <strain>CBS 102646</strain>
        <strain>E167</strain>
    </source>
</reference>
<reference key="2">
    <citation type="journal article" date="2005" name="Genetics">
        <title>Gene clusters for insecticidal loline alkaloids in the grass-endophytic fungus Neotyphodium uncinatum.</title>
        <authorList>
            <person name="Spiering M.J."/>
            <person name="Moon C.D."/>
            <person name="Wilkinson H.H."/>
            <person name="Schardl C.L."/>
        </authorList>
    </citation>
    <scope>NUCLEOTIDE SEQUENCE [GENOMIC DNA]</scope>
    <scope>INDUCTION</scope>
    <scope>FUNCTION</scope>
    <scope>DISRUPTION PHENOTYPE</scope>
    <source>
        <strain>CBS 102646</strain>
    </source>
</reference>
<reference key="3">
    <citation type="journal article" date="2005" name="ChemBioChem">
        <title>Biosynthetic precursors of fungal pyrrolizidines, the loline alkaloids.</title>
        <authorList>
            <person name="Blankenship J.D."/>
            <person name="Houseknecht J.B."/>
            <person name="Pal S."/>
            <person name="Bush L.P."/>
            <person name="Grossman R.B."/>
            <person name="Schardl C.L."/>
        </authorList>
    </citation>
    <scope>FUNCTION</scope>
</reference>
<reference key="4">
    <citation type="journal article" date="2006" name="ChemBioChem">
        <title>On the sequence of bond formation in loline alkaloid biosynthesis.</title>
        <authorList>
            <person name="Faulkner J.R."/>
            <person name="Hussaini S.R."/>
            <person name="Blankenship J.D."/>
            <person name="Pal S."/>
            <person name="Branan B.M."/>
            <person name="Grossman R.B."/>
            <person name="Schardl C.L."/>
        </authorList>
    </citation>
    <scope>FUNCTION</scope>
</reference>
<reference key="5">
    <citation type="journal article" date="2008" name="Fungal Genet. Biol.">
        <title>Role of the LolP cytochrome P450 monooxygenase in loline alkaloid biosynthesis.</title>
        <authorList>
            <person name="Spiering M.J."/>
            <person name="Faulkner J.R."/>
            <person name="Zhang D.X."/>
            <person name="Machado C."/>
            <person name="Grossman R.B."/>
            <person name="Schardl C.L."/>
        </authorList>
    </citation>
    <scope>FUNCTION</scope>
    <source>
        <strain>CBS 102646</strain>
    </source>
</reference>
<reference key="6">
    <citation type="journal article" date="2014" name="Phytochemistry">
        <title>Ether bridge formation in loline alkaloid biosynthesis.</title>
        <authorList>
            <person name="Pan J."/>
            <person name="Bhardwaj M."/>
            <person name="Faulkner J.R."/>
            <person name="Nagabhyru P."/>
            <person name="Charlton N.D."/>
            <person name="Higashi R.M."/>
            <person name="Miller A.F."/>
            <person name="Young C.A."/>
            <person name="Grossman R.B."/>
            <person name="Schardl C.L."/>
        </authorList>
    </citation>
    <scope>FUNCTION</scope>
</reference>
<reference key="7">
    <citation type="journal article" date="2014" name="PLoS ONE">
        <title>Enzymes from fungal and plant origin required for chemical diversification of insecticidal loline alkaloids in grass-Epichloe symbiota.</title>
        <authorList>
            <person name="Pan J."/>
            <person name="Bhardwaj M."/>
            <person name="Nagabhyru P."/>
            <person name="Grossman R.B."/>
            <person name="Schardl C.L."/>
        </authorList>
    </citation>
    <scope>FUNCTION</scope>
    <scope>BIOTECHNOLOGY</scope>
</reference>
<reference key="8">
    <citation type="journal article" date="2018" name="Biochemistry">
        <title>Installation of the ether bridge of lolines by the iron- and 2-oxoglutarate-dependent oxygenase, lolO: regio- and stereochemistry of sequential hydroxylation and oxacyclization reactions.</title>
        <authorList>
            <person name="Pan J."/>
            <person name="Bhardwaj M."/>
            <person name="Zhang B."/>
            <person name="Chang W.C."/>
            <person name="Schardl C.L."/>
            <person name="Krebs C."/>
            <person name="Grossman R.B."/>
            <person name="Bollinger J.M. Jr."/>
        </authorList>
    </citation>
    <scope>FUNCTION</scope>
</reference>
<dbReference type="EC" id="2.5.1.-" evidence="13"/>
<dbReference type="EMBL" id="AF461175">
    <property type="protein sequence ID" value="AAN32868.1"/>
    <property type="molecule type" value="mRNA"/>
</dbReference>
<dbReference type="EMBL" id="AY723749">
    <property type="protein sequence ID" value="AAV68703.1"/>
    <property type="molecule type" value="Genomic_DNA"/>
</dbReference>
<dbReference type="SMR" id="Q8J0B2"/>
<dbReference type="GO" id="GO:0005737">
    <property type="term" value="C:cytoplasm"/>
    <property type="evidence" value="ECO:0007669"/>
    <property type="project" value="TreeGrafter"/>
</dbReference>
<dbReference type="GO" id="GO:0004124">
    <property type="term" value="F:cysteine synthase activity"/>
    <property type="evidence" value="ECO:0007669"/>
    <property type="project" value="TreeGrafter"/>
</dbReference>
<dbReference type="GO" id="GO:0003961">
    <property type="term" value="F:O-acetylhomoserine aminocarboxypropyltransferase activity"/>
    <property type="evidence" value="ECO:0007669"/>
    <property type="project" value="TreeGrafter"/>
</dbReference>
<dbReference type="GO" id="GO:0030170">
    <property type="term" value="F:pyridoxal phosphate binding"/>
    <property type="evidence" value="ECO:0007669"/>
    <property type="project" value="InterPro"/>
</dbReference>
<dbReference type="GO" id="GO:0009820">
    <property type="term" value="P:alkaloid metabolic process"/>
    <property type="evidence" value="ECO:0007669"/>
    <property type="project" value="UniProtKB-KW"/>
</dbReference>
<dbReference type="GO" id="GO:0006535">
    <property type="term" value="P:cysteine biosynthetic process from serine"/>
    <property type="evidence" value="ECO:0007669"/>
    <property type="project" value="TreeGrafter"/>
</dbReference>
<dbReference type="GO" id="GO:0071269">
    <property type="term" value="P:L-homocysteine biosynthetic process"/>
    <property type="evidence" value="ECO:0007669"/>
    <property type="project" value="TreeGrafter"/>
</dbReference>
<dbReference type="GO" id="GO:0019346">
    <property type="term" value="P:transsulfuration"/>
    <property type="evidence" value="ECO:0007669"/>
    <property type="project" value="InterPro"/>
</dbReference>
<dbReference type="CDD" id="cd00614">
    <property type="entry name" value="CGS_like"/>
    <property type="match status" value="1"/>
</dbReference>
<dbReference type="FunFam" id="3.40.640.10:FF:000035">
    <property type="entry name" value="O-succinylhomoserine sulfhydrylase"/>
    <property type="match status" value="1"/>
</dbReference>
<dbReference type="Gene3D" id="3.90.1150.10">
    <property type="entry name" value="Aspartate Aminotransferase, domain 1"/>
    <property type="match status" value="1"/>
</dbReference>
<dbReference type="Gene3D" id="3.40.640.10">
    <property type="entry name" value="Type I PLP-dependent aspartate aminotransferase-like (Major domain)"/>
    <property type="match status" value="1"/>
</dbReference>
<dbReference type="InterPro" id="IPR000277">
    <property type="entry name" value="Cys/Met-Metab_PyrdxlP-dep_enz"/>
</dbReference>
<dbReference type="InterPro" id="IPR054542">
    <property type="entry name" value="Cys_met_metab_PP"/>
</dbReference>
<dbReference type="InterPro" id="IPR006235">
    <property type="entry name" value="OAc-hSer/O-AcSer_sulfhydrylase"/>
</dbReference>
<dbReference type="InterPro" id="IPR015424">
    <property type="entry name" value="PyrdxlP-dep_Trfase"/>
</dbReference>
<dbReference type="InterPro" id="IPR015421">
    <property type="entry name" value="PyrdxlP-dep_Trfase_major"/>
</dbReference>
<dbReference type="InterPro" id="IPR015422">
    <property type="entry name" value="PyrdxlP-dep_Trfase_small"/>
</dbReference>
<dbReference type="NCBIfam" id="TIGR01326">
    <property type="entry name" value="OAH_OAS_sulfhy"/>
    <property type="match status" value="1"/>
</dbReference>
<dbReference type="PANTHER" id="PTHR43797">
    <property type="entry name" value="HOMOCYSTEINE/CYSTEINE SYNTHASE"/>
    <property type="match status" value="1"/>
</dbReference>
<dbReference type="PANTHER" id="PTHR43797:SF2">
    <property type="entry name" value="HOMOCYSTEINE_CYSTEINE SYNTHASE"/>
    <property type="match status" value="1"/>
</dbReference>
<dbReference type="Pfam" id="PF01053">
    <property type="entry name" value="Cys_Met_Meta_PP"/>
    <property type="match status" value="1"/>
</dbReference>
<dbReference type="PIRSF" id="PIRSF001434">
    <property type="entry name" value="CGS"/>
    <property type="match status" value="1"/>
</dbReference>
<dbReference type="SUPFAM" id="SSF53383">
    <property type="entry name" value="PLP-dependent transferases"/>
    <property type="match status" value="1"/>
</dbReference>
<dbReference type="PROSITE" id="PS00868">
    <property type="entry name" value="CYS_MET_METAB_PP"/>
    <property type="match status" value="1"/>
</dbReference>
<proteinExistence type="evidence at transcript level"/>